<reference key="1">
    <citation type="journal article" date="2007" name="Curr. Biol.">
        <title>Reduced genome of the thioautotrophic intracellular symbiont in a deep-sea clam, Calyptogena okutanii.</title>
        <authorList>
            <person name="Kuwahara H."/>
            <person name="Yoshida T."/>
            <person name="Takaki Y."/>
            <person name="Shimamura S."/>
            <person name="Nishi S."/>
            <person name="Harada M."/>
            <person name="Matsuyama K."/>
            <person name="Takishita K."/>
            <person name="Kawato M."/>
            <person name="Uematsu K."/>
            <person name="Fujiwara Y."/>
            <person name="Sato T."/>
            <person name="Kato C."/>
            <person name="Kitagawa M."/>
            <person name="Kato I."/>
            <person name="Maruyama T."/>
        </authorList>
    </citation>
    <scope>NUCLEOTIDE SEQUENCE [LARGE SCALE GENOMIC DNA]</scope>
    <source>
        <strain>HA</strain>
    </source>
</reference>
<feature type="chain" id="PRO_0000336357" description="Imidazoleglycerol-phosphate dehydratase">
    <location>
        <begin position="1"/>
        <end position="192"/>
    </location>
</feature>
<gene>
    <name evidence="1" type="primary">hisB</name>
    <name type="ordered locus">COSY_0849</name>
</gene>
<proteinExistence type="inferred from homology"/>
<evidence type="ECO:0000255" key="1">
    <source>
        <dbReference type="HAMAP-Rule" id="MF_00076"/>
    </source>
</evidence>
<organism>
    <name type="scientific">Vesicomyosocius okutanii subsp. Calyptogena okutanii (strain HA)</name>
    <dbReference type="NCBI Taxonomy" id="412965"/>
    <lineage>
        <taxon>Bacteria</taxon>
        <taxon>Pseudomonadati</taxon>
        <taxon>Pseudomonadota</taxon>
        <taxon>Gammaproteobacteria</taxon>
        <taxon>Candidatus Pseudothioglobaceae</taxon>
        <taxon>Candidatus Vesicomyosocius</taxon>
    </lineage>
</organism>
<keyword id="KW-0028">Amino-acid biosynthesis</keyword>
<keyword id="KW-0963">Cytoplasm</keyword>
<keyword id="KW-0368">Histidine biosynthesis</keyword>
<keyword id="KW-0456">Lyase</keyword>
<keyword id="KW-1185">Reference proteome</keyword>
<dbReference type="EC" id="4.2.1.19" evidence="1"/>
<dbReference type="EMBL" id="AP009247">
    <property type="protein sequence ID" value="BAF61954.1"/>
    <property type="molecule type" value="Genomic_DNA"/>
</dbReference>
<dbReference type="RefSeq" id="WP_011930223.1">
    <property type="nucleotide sequence ID" value="NC_009465.1"/>
</dbReference>
<dbReference type="SMR" id="A5CVR1"/>
<dbReference type="STRING" id="412965.COSY_0849"/>
<dbReference type="KEGG" id="vok:COSY_0849"/>
<dbReference type="eggNOG" id="COG0131">
    <property type="taxonomic scope" value="Bacteria"/>
</dbReference>
<dbReference type="HOGENOM" id="CLU_044308_2_0_6"/>
<dbReference type="OrthoDB" id="9790411at2"/>
<dbReference type="UniPathway" id="UPA00031">
    <property type="reaction ID" value="UER00011"/>
</dbReference>
<dbReference type="Proteomes" id="UP000000247">
    <property type="component" value="Chromosome"/>
</dbReference>
<dbReference type="GO" id="GO:0005737">
    <property type="term" value="C:cytoplasm"/>
    <property type="evidence" value="ECO:0007669"/>
    <property type="project" value="UniProtKB-SubCell"/>
</dbReference>
<dbReference type="GO" id="GO:0004424">
    <property type="term" value="F:imidazoleglycerol-phosphate dehydratase activity"/>
    <property type="evidence" value="ECO:0007669"/>
    <property type="project" value="UniProtKB-UniRule"/>
</dbReference>
<dbReference type="GO" id="GO:0000105">
    <property type="term" value="P:L-histidine biosynthetic process"/>
    <property type="evidence" value="ECO:0007669"/>
    <property type="project" value="UniProtKB-UniRule"/>
</dbReference>
<dbReference type="CDD" id="cd07914">
    <property type="entry name" value="IGPD"/>
    <property type="match status" value="1"/>
</dbReference>
<dbReference type="FunFam" id="3.30.230.40:FF:000001">
    <property type="entry name" value="Imidazoleglycerol-phosphate dehydratase HisB"/>
    <property type="match status" value="1"/>
</dbReference>
<dbReference type="FunFam" id="3.30.230.40:FF:000003">
    <property type="entry name" value="Imidazoleglycerol-phosphate dehydratase HisB"/>
    <property type="match status" value="1"/>
</dbReference>
<dbReference type="Gene3D" id="3.30.230.40">
    <property type="entry name" value="Imidazole glycerol phosphate dehydratase, domain 1"/>
    <property type="match status" value="2"/>
</dbReference>
<dbReference type="HAMAP" id="MF_00076">
    <property type="entry name" value="HisB"/>
    <property type="match status" value="1"/>
</dbReference>
<dbReference type="InterPro" id="IPR038494">
    <property type="entry name" value="IGPD_sf"/>
</dbReference>
<dbReference type="InterPro" id="IPR000807">
    <property type="entry name" value="ImidazoleglycerolP_deHydtase"/>
</dbReference>
<dbReference type="InterPro" id="IPR020565">
    <property type="entry name" value="ImidazoleglycerP_deHydtase_CS"/>
</dbReference>
<dbReference type="InterPro" id="IPR020568">
    <property type="entry name" value="Ribosomal_Su5_D2-typ_SF"/>
</dbReference>
<dbReference type="NCBIfam" id="NF002106">
    <property type="entry name" value="PRK00951.1-1"/>
    <property type="match status" value="1"/>
</dbReference>
<dbReference type="NCBIfam" id="NF002111">
    <property type="entry name" value="PRK00951.2-1"/>
    <property type="match status" value="1"/>
</dbReference>
<dbReference type="NCBIfam" id="NF002114">
    <property type="entry name" value="PRK00951.2-4"/>
    <property type="match status" value="1"/>
</dbReference>
<dbReference type="PANTHER" id="PTHR23133:SF2">
    <property type="entry name" value="IMIDAZOLEGLYCEROL-PHOSPHATE DEHYDRATASE"/>
    <property type="match status" value="1"/>
</dbReference>
<dbReference type="PANTHER" id="PTHR23133">
    <property type="entry name" value="IMIDAZOLEGLYCEROL-PHOSPHATE DEHYDRATASE HIS7"/>
    <property type="match status" value="1"/>
</dbReference>
<dbReference type="Pfam" id="PF00475">
    <property type="entry name" value="IGPD"/>
    <property type="match status" value="1"/>
</dbReference>
<dbReference type="SUPFAM" id="SSF54211">
    <property type="entry name" value="Ribosomal protein S5 domain 2-like"/>
    <property type="match status" value="2"/>
</dbReference>
<dbReference type="PROSITE" id="PS00954">
    <property type="entry name" value="IGP_DEHYDRATASE_1"/>
    <property type="match status" value="1"/>
</dbReference>
<dbReference type="PROSITE" id="PS00955">
    <property type="entry name" value="IGP_DEHYDRATASE_2"/>
    <property type="match status" value="1"/>
</dbReference>
<name>HIS7_VESOH</name>
<comment type="catalytic activity">
    <reaction evidence="1">
        <text>D-erythro-1-(imidazol-4-yl)glycerol 3-phosphate = 3-(imidazol-4-yl)-2-oxopropyl phosphate + H2O</text>
        <dbReference type="Rhea" id="RHEA:11040"/>
        <dbReference type="ChEBI" id="CHEBI:15377"/>
        <dbReference type="ChEBI" id="CHEBI:57766"/>
        <dbReference type="ChEBI" id="CHEBI:58278"/>
        <dbReference type="EC" id="4.2.1.19"/>
    </reaction>
</comment>
<comment type="pathway">
    <text evidence="1">Amino-acid biosynthesis; L-histidine biosynthesis; L-histidine from 5-phospho-alpha-D-ribose 1-diphosphate: step 6/9.</text>
</comment>
<comment type="subcellular location">
    <subcellularLocation>
        <location evidence="1">Cytoplasm</location>
    </subcellularLocation>
</comment>
<comment type="similarity">
    <text evidence="1">Belongs to the imidazoleglycerol-phosphate dehydratase family.</text>
</comment>
<protein>
    <recommendedName>
        <fullName evidence="1">Imidazoleglycerol-phosphate dehydratase</fullName>
        <shortName evidence="1">IGPD</shortName>
        <ecNumber evidence="1">4.2.1.19</ecNumber>
    </recommendedName>
</protein>
<sequence length="192" mass="21200">MIKVSRKTNETDISVELNLYGMGKASIDTGVPFLDHMLDQVARHGLMDLTIKCDGDIQIDDHHSVEDIGITLGQAFVQAVGDKKGLIRYGYSYVPLDESLSRVVLDLSGRPSLKLNVSFTRAMIGTFDVDLISEFFQGFVNHALVTLHIDNLKGINSHHQAETIFKAFGRALRVAITEDERQEGIPSTKGSL</sequence>
<accession>A5CVR1</accession>